<evidence type="ECO:0000250" key="1">
    <source>
        <dbReference type="UniProtKB" id="A0A1L8G016"/>
    </source>
</evidence>
<evidence type="ECO:0000255" key="2"/>
<evidence type="ECO:0000255" key="3">
    <source>
        <dbReference type="PROSITE-ProRule" id="PRU00547"/>
    </source>
</evidence>
<evidence type="ECO:0000256" key="4">
    <source>
        <dbReference type="SAM" id="MobiDB-lite"/>
    </source>
</evidence>
<evidence type="ECO:0000269" key="5">
    <source>
    </source>
</evidence>
<evidence type="ECO:0000269" key="6">
    <source>
    </source>
</evidence>
<evidence type="ECO:0000269" key="7">
    <source>
    </source>
</evidence>
<evidence type="ECO:0000269" key="8">
    <source>
    </source>
</evidence>
<evidence type="ECO:0000269" key="9">
    <source>
    </source>
</evidence>
<evidence type="ECO:0000269" key="10">
    <source>
    </source>
</evidence>
<evidence type="ECO:0000269" key="11">
    <source>
    </source>
</evidence>
<evidence type="ECO:0000269" key="12">
    <source ref="1"/>
</evidence>
<evidence type="ECO:0000303" key="13">
    <source>
    </source>
</evidence>
<evidence type="ECO:0000303" key="14">
    <source>
    </source>
</evidence>
<evidence type="ECO:0000303" key="15">
    <source>
    </source>
</evidence>
<evidence type="ECO:0000303" key="16">
    <source>
    </source>
</evidence>
<evidence type="ECO:0000303" key="17">
    <source>
    </source>
</evidence>
<evidence type="ECO:0000305" key="18"/>
<evidence type="ECO:0000312" key="19">
    <source>
        <dbReference type="HGNC" id="HGNC:16725"/>
    </source>
</evidence>
<feature type="chain" id="PRO_0000084496" description="Dynein axonemal assembly factor 11">
    <location>
        <begin position="1"/>
        <end position="466"/>
    </location>
</feature>
<feature type="repeat" description="LRR 1">
    <location>
        <begin position="22"/>
        <end position="43"/>
    </location>
</feature>
<feature type="repeat" description="LRR 2">
    <location>
        <begin position="45"/>
        <end position="66"/>
    </location>
</feature>
<feature type="repeat" description="LRR 3">
    <location>
        <begin position="67"/>
        <end position="88"/>
    </location>
</feature>
<feature type="repeat" description="LRR 4">
    <location>
        <begin position="89"/>
        <end position="110"/>
    </location>
</feature>
<feature type="domain" description="LRRCT">
    <location>
        <begin position="123"/>
        <end position="161"/>
    </location>
</feature>
<feature type="domain" description="CS" evidence="3">
    <location>
        <begin position="301"/>
        <end position="396"/>
    </location>
</feature>
<feature type="region of interest" description="Disordered" evidence="4">
    <location>
        <begin position="185"/>
        <end position="206"/>
    </location>
</feature>
<feature type="region of interest" description="Disordered" evidence="4">
    <location>
        <begin position="268"/>
        <end position="288"/>
    </location>
</feature>
<feature type="region of interest" description="Disordered" evidence="4">
    <location>
        <begin position="391"/>
        <end position="466"/>
    </location>
</feature>
<feature type="coiled-coil region" evidence="2">
    <location>
        <begin position="178"/>
        <end position="204"/>
    </location>
</feature>
<feature type="compositionally biased region" description="Basic and acidic residues" evidence="4">
    <location>
        <begin position="185"/>
        <end position="202"/>
    </location>
</feature>
<feature type="compositionally biased region" description="Basic residues" evidence="4">
    <location>
        <begin position="269"/>
        <end position="287"/>
    </location>
</feature>
<feature type="compositionally biased region" description="Basic and acidic residues" evidence="4">
    <location>
        <begin position="398"/>
        <end position="425"/>
    </location>
</feature>
<feature type="compositionally biased region" description="Basic and acidic residues" evidence="4">
    <location>
        <begin position="433"/>
        <end position="445"/>
    </location>
</feature>
<feature type="compositionally biased region" description="Acidic residues" evidence="4">
    <location>
        <begin position="450"/>
        <end position="460"/>
    </location>
</feature>
<feature type="splice variant" id="VSP_015862" description="In isoform 2." evidence="13">
    <original>RSKHME</original>
    <variation>SYSTGF</variation>
    <location>
        <begin position="409"/>
        <end position="414"/>
    </location>
</feature>
<feature type="splice variant" id="VSP_015863" description="In isoform 2." evidence="13">
    <location>
        <begin position="415"/>
        <end position="466"/>
    </location>
</feature>
<feature type="sequence variant" id="VAR_084433" description="In CILD19; uncertain significance." evidence="9">
    <original>N</original>
    <variation>K</variation>
    <location>
        <position position="61"/>
    </location>
</feature>
<feature type="sequence variant" id="VAR_069038" description="In CILD19; uncertain significance; dbSNP:rs397514596." evidence="5">
    <original>A</original>
    <variation>P</variation>
    <location>
        <position position="74"/>
    </location>
</feature>
<feature type="sequence variant" id="VAR_084434" description="In CILD19; no effect on interaction with ZMYND10." evidence="7">
    <original>C</original>
    <variation>R</variation>
    <location>
        <position position="87"/>
    </location>
</feature>
<feature type="sequence variant" id="VAR_069039" description="In CILD19; no effect on interaction with ZMYND10; reduced expression in cytoplasm; decreased expression of inner and outer dynein proteins; mislocation of inner and outer dynein proteins; dbSNP:rs200321595." evidence="5 6 7">
    <original>D</original>
    <variation>H</variation>
    <location>
        <position position="146"/>
    </location>
</feature>
<feature type="sequence variant" id="VAR_084435" description="In CILD19; loss of interaction with ZMYND10." evidence="7">
    <location>
        <begin position="188"/>
        <end position="466"/>
    </location>
</feature>
<feature type="sequence variant" id="VAR_084436" description="In CILD19." evidence="5">
    <location>
        <begin position="192"/>
        <end position="466"/>
    </location>
</feature>
<feature type="sequence variant" id="VAR_023603" description="In dbSNP:rs2293979." evidence="12">
    <original>T</original>
    <variation>I</variation>
    <location>
        <position position="232"/>
    </location>
</feature>
<feature type="sequence variant" id="VAR_084437" description="In CILD19; loss of protein expression." evidence="11">
    <location>
        <begin position="250"/>
        <end position="466"/>
    </location>
</feature>
<feature type="sequence variant" id="VAR_031223" description="In dbSNP:rs9297853.">
    <original>I</original>
    <variation>T</variation>
    <location>
        <position position="466"/>
    </location>
</feature>
<feature type="sequence conflict" description="In Ref. 1; AAB02976." evidence="18" ref="1">
    <location>
        <begin position="242"/>
        <end position="244"/>
    </location>
</feature>
<feature type="sequence conflict" description="In Ref. 2; AAH27589." evidence="18" ref="2">
    <location>
        <begin position="349"/>
        <end position="351"/>
    </location>
</feature>
<name>DAA11_HUMAN</name>
<organism>
    <name type="scientific">Homo sapiens</name>
    <name type="common">Human</name>
    <dbReference type="NCBI Taxonomy" id="9606"/>
    <lineage>
        <taxon>Eukaryota</taxon>
        <taxon>Metazoa</taxon>
        <taxon>Chordata</taxon>
        <taxon>Craniata</taxon>
        <taxon>Vertebrata</taxon>
        <taxon>Euteleostomi</taxon>
        <taxon>Mammalia</taxon>
        <taxon>Eutheria</taxon>
        <taxon>Euarchontoglires</taxon>
        <taxon>Primates</taxon>
        <taxon>Haplorrhini</taxon>
        <taxon>Catarrhini</taxon>
        <taxon>Hominidae</taxon>
        <taxon>Homo</taxon>
    </lineage>
</organism>
<gene>
    <name evidence="19" type="primary">DNAAF11</name>
    <name evidence="14 15 16 17" type="synonym">LRRC6</name>
    <name type="synonym">LRTP</name>
    <name type="synonym">TSLRP</name>
</gene>
<sequence>MGWITEDLIRRNAEHNDCVIFSLEELSLHQQEIERLEHIDKWCRDLKILYLQNNLIGKIENVSKLKKLEYLNLALNNIEKIENLEGCEELAKLDLTVNFIGELSSIKNLQHNIHLKELFLMGNPCASFDHYREFVVATLPQLKWLDGKEIEPSERIKALQDYSVIEPQIREQEKDHCLKRAKLKEEAQRKHQEEDKNEDKRSNAGFDGRWYTDINATLSSLESKDHLQAPDTEEHNTKKLDNSEDDLEFWNKPCLFTPESRLETLRHMEKQRKKQEKLSEKKKKVKPPRTLITEDGKALNVNEPKIDFSLKDNEKQIILDLAVYRYMDTSLIDVDVQPTYVRVMIKGKPFQLVLPAEVKPDSSSAKRSQTTGHLVICMPKVGEVITGGQRAFKSMKTTSDRSREQTNTRSKHMEKLEVDPSKHSFPDVTNIVQEKKHTPRRRPEPKIIPSEEDPTFEDNPEVPPLI</sequence>
<proteinExistence type="evidence at protein level"/>
<accession>Q86X45</accession>
<accession>Q13648</accession>
<accession>Q4G183</accession>
<comment type="function">
    <text evidence="5 6 11">Involved in dynein arm assembly, is important for expression and transporting outer dynein arm (ODA) proteins from the cytoplasm to the cilia (PubMed:23122589, PubMed:23527195, PubMed:33403504). Acts as a crucial component in the formation and motility of spermatozoal flagella (PubMed:33403504).</text>
</comment>
<comment type="subunit">
    <text evidence="7 10">Interacts (via CS domain) with ZMYND10 (via C-terminus).</text>
</comment>
<comment type="interaction">
    <interactant intactId="EBI-9379658">
        <id>Q86X45</id>
    </interactant>
    <interactant intactId="EBI-351257">
        <id>P26196</id>
        <label>DDX6</label>
    </interactant>
    <organismsDiffer>false</organismsDiffer>
    <experiments>3</experiments>
</comment>
<comment type="interaction">
    <interactant intactId="EBI-9379658">
        <id>Q86X45</id>
    </interactant>
    <interactant intactId="EBI-17658306">
        <id>Q96II8-3</id>
        <label>LRCH3</label>
    </interactant>
    <organismsDiffer>false</organismsDiffer>
    <experiments>3</experiments>
</comment>
<comment type="interaction">
    <interactant intactId="EBI-9379658">
        <id>Q86X45</id>
    </interactant>
    <interactant intactId="EBI-347416">
        <id>Q9Y333</id>
        <label>LSM2</label>
    </interactant>
    <organismsDiffer>false</organismsDiffer>
    <experiments>3</experiments>
</comment>
<comment type="interaction">
    <interactant intactId="EBI-9379658">
        <id>Q86X45</id>
    </interactant>
    <interactant intactId="EBI-16439278">
        <id>Q6FHY5</id>
        <label>MEOX2</label>
    </interactant>
    <organismsDiffer>false</organismsDiffer>
    <experiments>3</experiments>
</comment>
<comment type="interaction">
    <interactant intactId="EBI-9379658">
        <id>Q86X45</id>
    </interactant>
    <interactant intactId="EBI-742388">
        <id>Q9H8W4</id>
        <label>PLEKHF2</label>
    </interactant>
    <organismsDiffer>false</organismsDiffer>
    <experiments>3</experiments>
</comment>
<comment type="interaction">
    <interactant intactId="EBI-9379658">
        <id>Q86X45</id>
    </interactant>
    <interactant intactId="EBI-23806733">
        <id>Q7Z5L7-3</id>
        <label>PODN</label>
    </interactant>
    <organismsDiffer>false</organismsDiffer>
    <experiments>3</experiments>
</comment>
<comment type="interaction">
    <interactant intactId="EBI-9379658">
        <id>Q86X45</id>
    </interactant>
    <interactant intactId="EBI-357345">
        <id>Q14160</id>
        <label>SCRIB</label>
    </interactant>
    <organismsDiffer>false</organismsDiffer>
    <experiments>2</experiments>
</comment>
<comment type="interaction">
    <interactant intactId="EBI-9379658">
        <id>Q86X45</id>
    </interactant>
    <interactant intactId="EBI-12879730">
        <id>Q7RTT5</id>
        <label>SSX7</label>
    </interactant>
    <organismsDiffer>false</organismsDiffer>
    <experiments>3</experiments>
</comment>
<comment type="interaction">
    <interactant intactId="EBI-9379658">
        <id>Q86X45</id>
    </interactant>
    <interactant intactId="EBI-711018">
        <id>P54274-2</id>
        <label>TERF1</label>
    </interactant>
    <organismsDiffer>false</organismsDiffer>
    <experiments>3</experiments>
</comment>
<comment type="interaction">
    <interactant intactId="EBI-9379658">
        <id>Q86X45</id>
    </interactant>
    <interactant intactId="EBI-8656864">
        <id>Q6PF05</id>
        <label>TTC23L</label>
    </interactant>
    <organismsDiffer>false</organismsDiffer>
    <experiments>3</experiments>
</comment>
<comment type="subcellular location">
    <subcellularLocation>
        <location evidence="5 6 11">Cytoplasm</location>
    </subcellularLocation>
    <subcellularLocation>
        <location evidence="5">Cell projection</location>
        <location evidence="5">Cilium</location>
    </subcellularLocation>
    <subcellularLocation>
        <location evidence="1">Dynein axonemal particle</location>
    </subcellularLocation>
    <subcellularLocation>
        <location evidence="11">Cell projection</location>
        <location evidence="11">Cilium</location>
        <location evidence="11">Flagellum</location>
    </subcellularLocation>
</comment>
<comment type="alternative products">
    <event type="alternative splicing"/>
    <isoform>
        <id>Q86X45-1</id>
        <name>1</name>
        <sequence type="displayed"/>
    </isoform>
    <isoform>
        <id>Q86X45-2</id>
        <name>2</name>
        <sequence type="described" ref="VSP_015862 VSP_015863"/>
    </isoform>
</comment>
<comment type="tissue specificity">
    <text evidence="5 6 11">Expressed predominantly in testis and in nasal epithelial cells.</text>
</comment>
<comment type="developmental stage">
    <text evidence="11">Localized in the cytoplasm of early spermatogonia and spermatids of different spermatogenic stages and in the flagella of mature epididymal spermatozoa.</text>
</comment>
<comment type="disease" evidence="5 6 7 8 9 11">
    <disease id="DI-03564">
        <name>Ciliary dyskinesia, primary, 19</name>
        <acronym>CILD19</acronym>
        <description>A disorder characterized by abnormalities of motile cilia. Respiratory infections leading to chronic inflammation and bronchiectasis are recurrent, due to defects in the respiratory cilia; reduced fertility is often observed in male patients due to abnormalities of sperm tails. Half of the patients exhibit randomization of left-right body asymmetry and situs inversus, due to dysfunction of monocilia at the embryonic node. Primary ciliary dyskinesia associated with situs inversus is referred to as Kartagener syndrome.</description>
        <dbReference type="MIM" id="614935"/>
    </disease>
    <text>The disease is caused by variants affecting the gene represented in this entry.</text>
</comment>
<comment type="similarity">
    <text evidence="18">Belongs to the tilB family.</text>
</comment>
<protein>
    <recommendedName>
        <fullName evidence="18">Dynein axonemal assembly factor 11</fullName>
        <shortName evidence="18">DNAAF11</shortName>
    </recommendedName>
    <alternativeName>
        <fullName evidence="15 17">Leucine-rich repeat-containing protein 6</fullName>
    </alternativeName>
    <alternativeName>
        <fullName>Leucine-rich testis-specific protein</fullName>
    </alternativeName>
    <alternativeName>
        <fullName>Protein tilB homolog</fullName>
    </alternativeName>
    <alternativeName>
        <fullName>Testis-specific leucine-rich repeat protein</fullName>
    </alternativeName>
</protein>
<keyword id="KW-0025">Alternative splicing</keyword>
<keyword id="KW-0966">Cell projection</keyword>
<keyword id="KW-1186">Ciliopathy</keyword>
<keyword id="KW-0969">Cilium</keyword>
<keyword id="KW-0175">Coiled coil</keyword>
<keyword id="KW-0963">Cytoplasm</keyword>
<keyword id="KW-0225">Disease variant</keyword>
<keyword id="KW-0282">Flagellum</keyword>
<keyword id="KW-1012">Kartagener syndrome</keyword>
<keyword id="KW-0433">Leucine-rich repeat</keyword>
<keyword id="KW-0990">Primary ciliary dyskinesia</keyword>
<keyword id="KW-1267">Proteomics identification</keyword>
<keyword id="KW-1185">Reference proteome</keyword>
<keyword id="KW-0677">Repeat</keyword>
<reference key="1">
    <citation type="submission" date="1996-06" db="EMBL/GenBank/DDBJ databases">
        <authorList>
            <person name="O'Hern P.A."/>
            <person name="Yavetz H."/>
            <person name="Moy T."/>
            <person name="Yavetz B."/>
            <person name="Liang Z.G."/>
            <person name="Wang G.Y."/>
            <person name="Goldberg E."/>
        </authorList>
    </citation>
    <scope>NUCLEOTIDE SEQUENCE [MRNA] (ISOFORM 1)</scope>
    <scope>VARIANT ILE-232</scope>
</reference>
<reference key="2">
    <citation type="journal article" date="2004" name="Genome Res.">
        <title>The status, quality, and expansion of the NIH full-length cDNA project: the Mammalian Gene Collection (MGC).</title>
        <authorList>
            <consortium name="The MGC Project Team"/>
        </authorList>
    </citation>
    <scope>NUCLEOTIDE SEQUENCE [LARGE SCALE MRNA] (ISOFORMS 1 AND 2)</scope>
    <source>
        <tissue>Brain</tissue>
        <tissue>Testis</tissue>
    </source>
</reference>
<reference key="3">
    <citation type="journal article" date="2018" name="PLoS Genet.">
        <title>ZMYND10 stabilizes intermediate chain proteins in the cytoplasmic pre-assembly of dynein arms.</title>
        <authorList>
            <person name="Cho K.J."/>
            <person name="Noh S.H."/>
            <person name="Han S.M."/>
            <person name="Choi W.I."/>
            <person name="Kim H.Y."/>
            <person name="Yu S."/>
            <person name="Lee J.S."/>
            <person name="Rim J.H."/>
            <person name="Lee M.G."/>
            <person name="Hildebrandt F."/>
            <person name="Gee H.Y."/>
        </authorList>
    </citation>
    <scope>INTERACTION WITH ZMYND10</scope>
</reference>
<reference key="4">
    <citation type="journal article" date="2012" name="Am. J. Hum. Genet.">
        <title>Loss-of-function mutations in LRRC6, a gene essential for proper axonemal assembly of inner and outer dynein arms, cause primary ciliary dyskinesia.</title>
        <authorList>
            <person name="Kott E."/>
            <person name="Duquesnoy P."/>
            <person name="Copin B."/>
            <person name="Legendre M."/>
            <person name="Dastot-Le Moal F."/>
            <person name="Montantin G."/>
            <person name="Jeanson L."/>
            <person name="Tamalet A."/>
            <person name="Papon J.F."/>
            <person name="Siffroi J.P."/>
            <person name="Rives N."/>
            <person name="Mitchell V."/>
            <person name="de Blic J."/>
            <person name="Coste A."/>
            <person name="Clement A."/>
            <person name="Escalier D."/>
            <person name="Toure A."/>
            <person name="Escudier E."/>
            <person name="Amselem S."/>
        </authorList>
    </citation>
    <scope>VARIANTS CILD19 PRO-74; HIS-146 AND 192-GLN--ILE-466 DEL</scope>
    <scope>FUNCTION</scope>
    <scope>SUBCELLULAR LOCATION</scope>
    <scope>TISSUE SPECIFICITY</scope>
</reference>
<reference key="5">
    <citation type="journal article" date="2013" name="Am. J. Hum. Genet.">
        <title>ZMYND10 is mutated in primary ciliary dyskinesia and interacts with LRRC6.</title>
        <authorList>
            <person name="Zariwala M.A."/>
            <person name="Gee H.Y."/>
            <person name="Kurkowiak M."/>
            <person name="Al-Mutairi D.A."/>
            <person name="Leigh M.W."/>
            <person name="Hurd T.W."/>
            <person name="Hjeij R."/>
            <person name="Dell S.D."/>
            <person name="Chaki M."/>
            <person name="Dougherty G.W."/>
            <person name="Adan M."/>
            <person name="Spear P.C."/>
            <person name="Esteve-Rudd J."/>
            <person name="Loges N.T."/>
            <person name="Rosenfeld M."/>
            <person name="Diaz K.A."/>
            <person name="Olbrich H."/>
            <person name="Wolf W.E."/>
            <person name="Sheridan E."/>
            <person name="Batten T.F."/>
            <person name="Halbritter J."/>
            <person name="Porath J.D."/>
            <person name="Kohl S."/>
            <person name="Lovric S."/>
            <person name="Hwang D.Y."/>
            <person name="Pittman J.E."/>
            <person name="Burns K.A."/>
            <person name="Ferkol T.W."/>
            <person name="Sagel S.D."/>
            <person name="Olivier K.N."/>
            <person name="Morgan L.C."/>
            <person name="Werner C."/>
            <person name="Raidt J."/>
            <person name="Pennekamp P."/>
            <person name="Sun Z."/>
            <person name="Zhou W."/>
            <person name="Airik R."/>
            <person name="Natarajan S."/>
            <person name="Allen S.J."/>
            <person name="Amirav I."/>
            <person name="Wieczorek D."/>
            <person name="Landwehr K."/>
            <person name="Nielsen K."/>
            <person name="Schwerk N."/>
            <person name="Sertic J."/>
            <person name="Kohler G."/>
            <person name="Washburn J."/>
            <person name="Levy S."/>
            <person name="Fan S."/>
            <person name="Koerner-Rettberg C."/>
            <person name="Amselem S."/>
            <person name="Williams D.S."/>
            <person name="Mitchell B.J."/>
            <person name="Drummond I.A."/>
            <person name="Otto E.A."/>
            <person name="Omran H."/>
            <person name="Knowles M.R."/>
            <person name="Hildebrandt F."/>
        </authorList>
    </citation>
    <scope>INTERACTION WITH ZMYND10</scope>
    <scope>INVOLVEMENT IN CILD19</scope>
    <scope>VARIANTS CILD19 ARG-87 AND 188-GLN--ILE-466 DEL</scope>
    <scope>CHARACTERIZATION OF VARIANTS CILD19 ARG-87; HIS-146 AND 188-GLN--ILE-466 DEL</scope>
</reference>
<reference key="6">
    <citation type="journal article" date="2013" name="PLoS ONE">
        <title>LRRC6 mutation causes primary ciliary dyskinesia with dynein arm defects.</title>
        <authorList>
            <person name="Horani A."/>
            <person name="Ferkol T.W."/>
            <person name="Shoseyov D."/>
            <person name="Wasserman M.G."/>
            <person name="Oren Y.S."/>
            <person name="Kerem B."/>
            <person name="Amirav I."/>
            <person name="Cohen-Cymberknoh M."/>
            <person name="Dutcher S.K."/>
            <person name="Brody S.L."/>
            <person name="Elpeleg O."/>
            <person name="Kerem E."/>
        </authorList>
    </citation>
    <scope>VARIANT CILD19 HIS-146</scope>
    <scope>CHARACTERIZATION OF VARIANT CILD19 HIS-146</scope>
    <scope>SUBCELLULAR LOCATION</scope>
    <scope>FUNCTION</scope>
    <scope>TISSUE SPECIFICITY</scope>
</reference>
<reference key="7">
    <citation type="journal article" date="2014" name="Eur. Respir. J.">
        <title>Ciliary beat pattern and frequency in genetic variants of primary ciliary dyskinesia.</title>
        <authorList>
            <person name="Raidt J."/>
            <person name="Wallmeier J."/>
            <person name="Hjeij R."/>
            <person name="Onnebrink J.G."/>
            <person name="Pennekamp P."/>
            <person name="Loges N.T."/>
            <person name="Olbrich H."/>
            <person name="Haeffner K."/>
            <person name="Dougherty G.W."/>
            <person name="Omran H."/>
            <person name="Werner C."/>
        </authorList>
    </citation>
    <scope>INVOLVEMENT IN CILD19</scope>
</reference>
<reference key="8">
    <citation type="journal article" date="2018" name="Biomed. Res. Int.">
        <title>Whole-Exome Sequencing Identified a Novel Compound Heterozygous Mutation of LRRC6 in a Chinese Primary Ciliary Dyskinesia Patient.</title>
        <authorList>
            <person name="Liu L."/>
            <person name="Luo H."/>
        </authorList>
    </citation>
    <scope>VARIANT CILD19 LYS-61</scope>
</reference>
<reference key="9">
    <citation type="journal article" date="2021" name="J. Assist. Reprod. Genet.">
        <title>The effect of a novel LRRC6 mutation on the flagellar ultrastructure in a primary ciliary dyskinesia patient.</title>
        <authorList>
            <person name="Li Y."/>
            <person name="Jiang C."/>
            <person name="Zhang X."/>
            <person name="Liu M."/>
            <person name="Sun Y."/>
            <person name="Yang Y."/>
            <person name="Shen Y."/>
        </authorList>
    </citation>
    <scope>VARIANT CILD19 250-TRP--ILE-466 DEL</scope>
    <scope>CHARACTERIZATION OF VARIANT CILD19 250-TRP--ILE-466 DEL</scope>
    <scope>TISSUE SPECIFICITY</scope>
    <scope>FUNCTION</scope>
    <scope>SUBCELLULAR LOCATION</scope>
    <scope>DEVELOPMENTAL STAGE</scope>
</reference>
<dbReference type="EMBL" id="U60666">
    <property type="protein sequence ID" value="AAB02976.1"/>
    <property type="molecule type" value="mRNA"/>
</dbReference>
<dbReference type="EMBL" id="BC027589">
    <property type="protein sequence ID" value="AAH27589.1"/>
    <property type="molecule type" value="mRNA"/>
</dbReference>
<dbReference type="EMBL" id="BC047286">
    <property type="protein sequence ID" value="AAH47286.1"/>
    <property type="molecule type" value="mRNA"/>
</dbReference>
<dbReference type="CCDS" id="CCDS6365.1">
    <molecule id="Q86X45-1"/>
</dbReference>
<dbReference type="RefSeq" id="NP_001308890.1">
    <property type="nucleotide sequence ID" value="NM_001321961.1"/>
</dbReference>
<dbReference type="RefSeq" id="NP_001308891.1">
    <property type="nucleotide sequence ID" value="NM_001321962.1"/>
</dbReference>
<dbReference type="RefSeq" id="NP_001308892.1">
    <property type="nucleotide sequence ID" value="NM_001321963.1"/>
</dbReference>
<dbReference type="RefSeq" id="NP_001308893.1">
    <property type="nucleotide sequence ID" value="NM_001321964.1"/>
</dbReference>
<dbReference type="RefSeq" id="NP_001308894.1">
    <property type="nucleotide sequence ID" value="NM_001321965.1"/>
</dbReference>
<dbReference type="RefSeq" id="NP_001308895.1">
    <property type="nucleotide sequence ID" value="NM_001321966.1"/>
</dbReference>
<dbReference type="RefSeq" id="NP_036604.2">
    <molecule id="Q86X45-1"/>
    <property type="nucleotide sequence ID" value="NM_012472.5"/>
</dbReference>
<dbReference type="SMR" id="Q86X45"/>
<dbReference type="BioGRID" id="117167">
    <property type="interactions" value="18"/>
</dbReference>
<dbReference type="CORUM" id="Q86X45"/>
<dbReference type="FunCoup" id="Q86X45">
    <property type="interactions" value="116"/>
</dbReference>
<dbReference type="IntAct" id="Q86X45">
    <property type="interactions" value="20"/>
</dbReference>
<dbReference type="MINT" id="Q86X45"/>
<dbReference type="STRING" id="9606.ENSP00000484634"/>
<dbReference type="GlyGen" id="Q86X45">
    <property type="glycosylation" value="1 site, 1 O-linked glycan (1 site)"/>
</dbReference>
<dbReference type="iPTMnet" id="Q86X45"/>
<dbReference type="PhosphoSitePlus" id="Q86X45"/>
<dbReference type="BioMuta" id="LRRC6"/>
<dbReference type="DMDM" id="134047813"/>
<dbReference type="MassIVE" id="Q86X45"/>
<dbReference type="PaxDb" id="9606-ENSP00000484634"/>
<dbReference type="PeptideAtlas" id="Q86X45"/>
<dbReference type="ProteomicsDB" id="70236">
    <molecule id="Q86X45-1"/>
</dbReference>
<dbReference type="ProteomicsDB" id="70237">
    <molecule id="Q86X45-2"/>
</dbReference>
<dbReference type="Antibodypedia" id="14134">
    <property type="antibodies" value="248 antibodies from 20 providers"/>
</dbReference>
<dbReference type="DNASU" id="23639"/>
<dbReference type="Ensembl" id="ENST00000519595.5">
    <molecule id="Q86X45-1"/>
    <property type="protein sequence ID" value="ENSP00000429791.1"/>
    <property type="gene ID" value="ENSG00000129295.10"/>
</dbReference>
<dbReference type="Ensembl" id="ENST00000620350.5">
    <molecule id="Q86X45-1"/>
    <property type="protein sequence ID" value="ENSP00000484634.1"/>
    <property type="gene ID" value="ENSG00000129295.10"/>
</dbReference>
<dbReference type="GeneID" id="23639"/>
<dbReference type="KEGG" id="hsa:23639"/>
<dbReference type="MANE-Select" id="ENST00000620350.5">
    <property type="protein sequence ID" value="ENSP00000484634.1"/>
    <property type="RefSeq nucleotide sequence ID" value="NM_012472.6"/>
    <property type="RefSeq protein sequence ID" value="NP_036604.2"/>
</dbReference>
<dbReference type="UCSC" id="uc003ytk.5">
    <molecule id="Q86X45-1"/>
    <property type="organism name" value="human"/>
</dbReference>
<dbReference type="AGR" id="HGNC:16725"/>
<dbReference type="CTD" id="23639"/>
<dbReference type="DisGeNET" id="23639"/>
<dbReference type="GeneCards" id="DNAAF11"/>
<dbReference type="GeneReviews" id="DNAAF11"/>
<dbReference type="HGNC" id="HGNC:16725">
    <property type="gene designation" value="DNAAF11"/>
</dbReference>
<dbReference type="HPA" id="ENSG00000129295">
    <property type="expression patterns" value="Tissue enhanced (choroid plexus, testis)"/>
</dbReference>
<dbReference type="MalaCards" id="DNAAF11"/>
<dbReference type="MIM" id="614930">
    <property type="type" value="gene"/>
</dbReference>
<dbReference type="MIM" id="614935">
    <property type="type" value="phenotype"/>
</dbReference>
<dbReference type="neXtProt" id="NX_Q86X45"/>
<dbReference type="OpenTargets" id="ENSG00000129295"/>
<dbReference type="Orphanet" id="244">
    <property type="disease" value="Primary ciliary dyskinesia"/>
</dbReference>
<dbReference type="VEuPathDB" id="HostDB:ENSG00000129295"/>
<dbReference type="eggNOG" id="KOG0531">
    <property type="taxonomic scope" value="Eukaryota"/>
</dbReference>
<dbReference type="GeneTree" id="ENSGT00940000158506"/>
<dbReference type="InParanoid" id="Q86X45"/>
<dbReference type="OMA" id="QHRAVIV"/>
<dbReference type="PAN-GO" id="Q86X45">
    <property type="GO annotations" value="2 GO annotations based on evolutionary models"/>
</dbReference>
<dbReference type="PhylomeDB" id="Q86X45"/>
<dbReference type="TreeFam" id="TF324815"/>
<dbReference type="PathwayCommons" id="Q86X45"/>
<dbReference type="SignaLink" id="Q86X45"/>
<dbReference type="BioGRID-ORCS" id="23639">
    <property type="hits" value="11 hits in 1133 CRISPR screens"/>
</dbReference>
<dbReference type="ChiTaRS" id="LRRC6">
    <property type="organism name" value="human"/>
</dbReference>
<dbReference type="GenomeRNAi" id="23639"/>
<dbReference type="Pharos" id="Q86X45">
    <property type="development level" value="Tbio"/>
</dbReference>
<dbReference type="PRO" id="PR:Q86X45"/>
<dbReference type="Proteomes" id="UP000005640">
    <property type="component" value="Chromosome 8"/>
</dbReference>
<dbReference type="RNAct" id="Q86X45">
    <property type="molecule type" value="protein"/>
</dbReference>
<dbReference type="Bgee" id="ENSG00000129295">
    <property type="expression patterns" value="Expressed in right uterine tube and 141 other cell types or tissues"/>
</dbReference>
<dbReference type="ExpressionAtlas" id="Q86X45">
    <property type="expression patterns" value="baseline and differential"/>
</dbReference>
<dbReference type="GO" id="GO:0090651">
    <property type="term" value="C:apical cytoplasm"/>
    <property type="evidence" value="ECO:0007669"/>
    <property type="project" value="Ensembl"/>
</dbReference>
<dbReference type="GO" id="GO:0005929">
    <property type="term" value="C:cilium"/>
    <property type="evidence" value="ECO:0000314"/>
    <property type="project" value="BHF-UCL"/>
</dbReference>
<dbReference type="GO" id="GO:0005737">
    <property type="term" value="C:cytoplasm"/>
    <property type="evidence" value="ECO:0000314"/>
    <property type="project" value="UniProtKB"/>
</dbReference>
<dbReference type="GO" id="GO:0005829">
    <property type="term" value="C:cytosol"/>
    <property type="evidence" value="ECO:0000250"/>
    <property type="project" value="UniProtKB"/>
</dbReference>
<dbReference type="GO" id="GO:0120293">
    <property type="term" value="C:dynein axonemal particle"/>
    <property type="evidence" value="ECO:0000250"/>
    <property type="project" value="UniProtKB"/>
</dbReference>
<dbReference type="GO" id="GO:0005576">
    <property type="term" value="C:extracellular region"/>
    <property type="evidence" value="ECO:0007669"/>
    <property type="project" value="GOC"/>
</dbReference>
<dbReference type="GO" id="GO:0031514">
    <property type="term" value="C:motile cilium"/>
    <property type="evidence" value="ECO:0007669"/>
    <property type="project" value="UniProtKB-SubCell"/>
</dbReference>
<dbReference type="GO" id="GO:0070286">
    <property type="term" value="P:axonemal dynein complex assembly"/>
    <property type="evidence" value="ECO:0000315"/>
    <property type="project" value="UniProtKB"/>
</dbReference>
<dbReference type="GO" id="GO:0090660">
    <property type="term" value="P:cerebrospinal fluid circulation"/>
    <property type="evidence" value="ECO:0000250"/>
    <property type="project" value="UniProtKB"/>
</dbReference>
<dbReference type="GO" id="GO:0003341">
    <property type="term" value="P:cilium movement"/>
    <property type="evidence" value="ECO:0000315"/>
    <property type="project" value="BHF-UCL"/>
</dbReference>
<dbReference type="GO" id="GO:0060287">
    <property type="term" value="P:epithelial cilium movement involved in determination of left/right asymmetry"/>
    <property type="evidence" value="ECO:0000315"/>
    <property type="project" value="BHF-UCL"/>
</dbReference>
<dbReference type="GO" id="GO:0003351">
    <property type="term" value="P:epithelial cilium movement involved in extracellular fluid movement"/>
    <property type="evidence" value="ECO:0000250"/>
    <property type="project" value="UniProtKB"/>
</dbReference>
<dbReference type="GO" id="GO:0051649">
    <property type="term" value="P:establishment of localization in cell"/>
    <property type="evidence" value="ECO:0000250"/>
    <property type="project" value="UniProtKB"/>
</dbReference>
<dbReference type="GO" id="GO:0030317">
    <property type="term" value="P:flagellated sperm motility"/>
    <property type="evidence" value="ECO:0000315"/>
    <property type="project" value="BHF-UCL"/>
</dbReference>
<dbReference type="GO" id="GO:0036159">
    <property type="term" value="P:inner dynein arm assembly"/>
    <property type="evidence" value="ECO:0000315"/>
    <property type="project" value="BHF-UCL"/>
</dbReference>
<dbReference type="GO" id="GO:0008584">
    <property type="term" value="P:male gonad development"/>
    <property type="evidence" value="ECO:0000250"/>
    <property type="project" value="BHF-UCL"/>
</dbReference>
<dbReference type="GO" id="GO:0044458">
    <property type="term" value="P:motile cilium assembly"/>
    <property type="evidence" value="ECO:0000315"/>
    <property type="project" value="BHF-UCL"/>
</dbReference>
<dbReference type="GO" id="GO:0036158">
    <property type="term" value="P:outer dynein arm assembly"/>
    <property type="evidence" value="ECO:0000315"/>
    <property type="project" value="BHF-UCL"/>
</dbReference>
<dbReference type="GO" id="GO:0061512">
    <property type="term" value="P:protein localization to cilium"/>
    <property type="evidence" value="ECO:0000250"/>
    <property type="project" value="UniProtKB"/>
</dbReference>
<dbReference type="GO" id="GO:0120229">
    <property type="term" value="P:protein localization to motile cilium"/>
    <property type="evidence" value="ECO:0000315"/>
    <property type="project" value="UniProtKB"/>
</dbReference>
<dbReference type="GO" id="GO:0061458">
    <property type="term" value="P:reproductive system development"/>
    <property type="evidence" value="ECO:0000315"/>
    <property type="project" value="BHF-UCL"/>
</dbReference>
<dbReference type="FunFam" id="3.80.10.10:FF:000052">
    <property type="entry name" value="Leucine rich repeat containing 6"/>
    <property type="match status" value="1"/>
</dbReference>
<dbReference type="Gene3D" id="3.80.10.10">
    <property type="entry name" value="Ribonuclease Inhibitor"/>
    <property type="match status" value="1"/>
</dbReference>
<dbReference type="InterPro" id="IPR056496">
    <property type="entry name" value="CS_DNAAF11_C"/>
</dbReference>
<dbReference type="InterPro" id="IPR007052">
    <property type="entry name" value="CS_dom"/>
</dbReference>
<dbReference type="InterPro" id="IPR001611">
    <property type="entry name" value="Leu-rich_rpt"/>
</dbReference>
<dbReference type="InterPro" id="IPR032675">
    <property type="entry name" value="LRR_dom_sf"/>
</dbReference>
<dbReference type="InterPro" id="IPR003603">
    <property type="entry name" value="U2A'_phosphoprotein32A_C"/>
</dbReference>
<dbReference type="PANTHER" id="PTHR18849:SF0">
    <property type="entry name" value="CILIA- AND FLAGELLA-ASSOCIATED PROTEIN 410-RELATED"/>
    <property type="match status" value="1"/>
</dbReference>
<dbReference type="PANTHER" id="PTHR18849">
    <property type="entry name" value="LEUCINE RICH REPEAT PROTEIN"/>
    <property type="match status" value="1"/>
</dbReference>
<dbReference type="Pfam" id="PF23602">
    <property type="entry name" value="CS_DNAAF11_C"/>
    <property type="match status" value="1"/>
</dbReference>
<dbReference type="Pfam" id="PF14580">
    <property type="entry name" value="LRR_9"/>
    <property type="match status" value="1"/>
</dbReference>
<dbReference type="SMART" id="SM00365">
    <property type="entry name" value="LRR_SD22"/>
    <property type="match status" value="3"/>
</dbReference>
<dbReference type="SMART" id="SM00446">
    <property type="entry name" value="LRRcap"/>
    <property type="match status" value="1"/>
</dbReference>
<dbReference type="SUPFAM" id="SSF52058">
    <property type="entry name" value="L domain-like"/>
    <property type="match status" value="1"/>
</dbReference>
<dbReference type="PROSITE" id="PS51203">
    <property type="entry name" value="CS"/>
    <property type="match status" value="1"/>
</dbReference>
<dbReference type="PROSITE" id="PS51450">
    <property type="entry name" value="LRR"/>
    <property type="match status" value="5"/>
</dbReference>